<proteinExistence type="evidence at transcript level"/>
<organism>
    <name type="scientific">Ascaris suum</name>
    <name type="common">Pig roundworm</name>
    <name type="synonym">Ascaris lumbricoides</name>
    <dbReference type="NCBI Taxonomy" id="6253"/>
    <lineage>
        <taxon>Eukaryota</taxon>
        <taxon>Metazoa</taxon>
        <taxon>Ecdysozoa</taxon>
        <taxon>Nematoda</taxon>
        <taxon>Chromadorea</taxon>
        <taxon>Rhabditida</taxon>
        <taxon>Spirurina</taxon>
        <taxon>Ascaridomorpha</taxon>
        <taxon>Ascaridoidea</taxon>
        <taxon>Ascarididae</taxon>
        <taxon>Ascaris</taxon>
    </lineage>
</organism>
<dbReference type="EC" id="1.7.1.7"/>
<dbReference type="EMBL" id="M82838">
    <property type="protein sequence ID" value="AAA29373.1"/>
    <property type="molecule type" value="mRNA"/>
</dbReference>
<dbReference type="SMR" id="P27442"/>
<dbReference type="GO" id="GO:1902560">
    <property type="term" value="C:GMP reductase complex"/>
    <property type="evidence" value="ECO:0007669"/>
    <property type="project" value="InterPro"/>
</dbReference>
<dbReference type="GO" id="GO:0003920">
    <property type="term" value="F:GMP reductase activity"/>
    <property type="evidence" value="ECO:0007669"/>
    <property type="project" value="UniProtKB-UniRule"/>
</dbReference>
<dbReference type="GO" id="GO:0046872">
    <property type="term" value="F:metal ion binding"/>
    <property type="evidence" value="ECO:0007669"/>
    <property type="project" value="UniProtKB-KW"/>
</dbReference>
<dbReference type="GO" id="GO:0006144">
    <property type="term" value="P:purine nucleobase metabolic process"/>
    <property type="evidence" value="ECO:0007669"/>
    <property type="project" value="UniProtKB-KW"/>
</dbReference>
<dbReference type="GO" id="GO:0006163">
    <property type="term" value="P:purine nucleotide metabolic process"/>
    <property type="evidence" value="ECO:0007669"/>
    <property type="project" value="UniProtKB-UniRule"/>
</dbReference>
<dbReference type="CDD" id="cd00381">
    <property type="entry name" value="IMPDH"/>
    <property type="match status" value="1"/>
</dbReference>
<dbReference type="FunFam" id="3.20.20.70:FF:000012">
    <property type="entry name" value="GMP reductase"/>
    <property type="match status" value="1"/>
</dbReference>
<dbReference type="Gene3D" id="3.20.20.70">
    <property type="entry name" value="Aldolase class I"/>
    <property type="match status" value="1"/>
</dbReference>
<dbReference type="HAMAP" id="MF_00596">
    <property type="entry name" value="GMP_reduct_type1"/>
    <property type="match status" value="1"/>
</dbReference>
<dbReference type="InterPro" id="IPR013785">
    <property type="entry name" value="Aldolase_TIM"/>
</dbReference>
<dbReference type="InterPro" id="IPR050139">
    <property type="entry name" value="GMP_reductase"/>
</dbReference>
<dbReference type="InterPro" id="IPR005993">
    <property type="entry name" value="GMPR"/>
</dbReference>
<dbReference type="InterPro" id="IPR015875">
    <property type="entry name" value="IMP_DH/GMP_Rdtase_CS"/>
</dbReference>
<dbReference type="InterPro" id="IPR001093">
    <property type="entry name" value="IMP_DH_GMPRt"/>
</dbReference>
<dbReference type="NCBIfam" id="TIGR01305">
    <property type="entry name" value="GMP_reduct_1"/>
    <property type="match status" value="1"/>
</dbReference>
<dbReference type="NCBIfam" id="NF003470">
    <property type="entry name" value="PRK05096.1"/>
    <property type="match status" value="1"/>
</dbReference>
<dbReference type="PANTHER" id="PTHR43170">
    <property type="entry name" value="GMP REDUCTASE"/>
    <property type="match status" value="1"/>
</dbReference>
<dbReference type="PANTHER" id="PTHR43170:SF5">
    <property type="entry name" value="GMP REDUCTASE"/>
    <property type="match status" value="1"/>
</dbReference>
<dbReference type="Pfam" id="PF00478">
    <property type="entry name" value="IMPDH"/>
    <property type="match status" value="1"/>
</dbReference>
<dbReference type="PIRSF" id="PIRSF000235">
    <property type="entry name" value="GMP_reductase"/>
    <property type="match status" value="1"/>
</dbReference>
<dbReference type="SMART" id="SM01240">
    <property type="entry name" value="IMPDH"/>
    <property type="match status" value="1"/>
</dbReference>
<dbReference type="SUPFAM" id="SSF51412">
    <property type="entry name" value="Inosine monophosphate dehydrogenase (IMPDH)"/>
    <property type="match status" value="1"/>
</dbReference>
<dbReference type="PROSITE" id="PS00487">
    <property type="entry name" value="IMP_DH_GMP_RED"/>
    <property type="match status" value="1"/>
</dbReference>
<reference key="1">
    <citation type="journal article" date="1992" name="Mol. Biochem. Parasitol.">
        <title>The GMP reductase gene of the nematode Ascaris lumbricoides var. suum.</title>
        <authorList>
            <person name="Gruidl M.E."/>
            <person name="Bunch K."/>
            <person name="Gharib S."/>
            <person name="Bennett K.L."/>
        </authorList>
    </citation>
    <scope>NUCLEOTIDE SEQUENCE [MRNA]</scope>
</reference>
<keyword id="KW-0479">Metal-binding</keyword>
<keyword id="KW-0521">NADP</keyword>
<keyword id="KW-0560">Oxidoreductase</keyword>
<keyword id="KW-0630">Potassium</keyword>
<keyword id="KW-0659">Purine metabolism</keyword>
<protein>
    <recommendedName>
        <fullName>GMP reductase</fullName>
        <ecNumber>1.7.1.7</ecNumber>
    </recommendedName>
    <alternativeName>
        <fullName>Guanosine 5'-monophosphate oxidoreductase</fullName>
        <shortName>Guanosine monophosphate reductase</shortName>
    </alternativeName>
</protein>
<name>GMPR_ASCSU</name>
<feature type="chain" id="PRO_0000093728" description="GMP reductase">
    <location>
        <begin position="1"/>
        <end position="356"/>
    </location>
</feature>
<feature type="active site" description="Thioimidate intermediate" evidence="1">
    <location>
        <position position="189"/>
    </location>
</feature>
<feature type="active site" description="Proton donor/acceptor" evidence="1">
    <location>
        <position position="191"/>
    </location>
</feature>
<feature type="binding site" evidence="1">
    <location>
        <begin position="26"/>
        <end position="27"/>
    </location>
    <ligand>
        <name>NADP(+)</name>
        <dbReference type="ChEBI" id="CHEBI:58349"/>
        <note>ligand shared between two neighboring subunits</note>
    </ligand>
</feature>
<feature type="binding site" description="in other chain" evidence="1">
    <location>
        <position position="78"/>
    </location>
    <ligand>
        <name>NADP(+)</name>
        <dbReference type="ChEBI" id="CHEBI:58349"/>
        <note>ligand shared between two neighboring subunits</note>
    </ligand>
</feature>
<feature type="binding site" description="in other chain" evidence="1">
    <location>
        <begin position="132"/>
        <end position="134"/>
    </location>
    <ligand>
        <name>NADP(+)</name>
        <dbReference type="ChEBI" id="CHEBI:58349"/>
        <note>ligand shared between two neighboring subunits</note>
    </ligand>
</feature>
<feature type="binding site" description="in other chain" evidence="1">
    <location>
        <begin position="183"/>
        <end position="184"/>
    </location>
    <ligand>
        <name>NADP(+)</name>
        <dbReference type="ChEBI" id="CHEBI:58349"/>
        <note>ligand shared between two neighboring subunits</note>
    </ligand>
</feature>
<feature type="binding site" evidence="1">
    <location>
        <position position="184"/>
    </location>
    <ligand>
        <name>K(+)</name>
        <dbReference type="ChEBI" id="CHEBI:29103"/>
    </ligand>
</feature>
<feature type="binding site" evidence="1">
    <location>
        <position position="186"/>
    </location>
    <ligand>
        <name>K(+)</name>
        <dbReference type="ChEBI" id="CHEBI:29103"/>
    </ligand>
</feature>
<feature type="binding site" evidence="1">
    <location>
        <position position="189"/>
    </location>
    <ligand>
        <name>K(+)</name>
        <dbReference type="ChEBI" id="CHEBI:29103"/>
    </ligand>
</feature>
<feature type="binding site" evidence="1">
    <location>
        <position position="192"/>
    </location>
    <ligand>
        <name>K(+)</name>
        <dbReference type="ChEBI" id="CHEBI:29103"/>
    </ligand>
</feature>
<feature type="binding site" evidence="1">
    <location>
        <begin position="222"/>
        <end position="224"/>
    </location>
    <ligand>
        <name>GMP</name>
        <dbReference type="ChEBI" id="CHEBI:58115"/>
    </ligand>
</feature>
<feature type="binding site" evidence="1">
    <location>
        <begin position="245"/>
        <end position="246"/>
    </location>
    <ligand>
        <name>GMP</name>
        <dbReference type="ChEBI" id="CHEBI:58115"/>
    </ligand>
</feature>
<feature type="binding site" evidence="1">
    <location>
        <begin position="271"/>
        <end position="273"/>
    </location>
    <ligand>
        <name>GMP</name>
        <dbReference type="ChEBI" id="CHEBI:58115"/>
    </ligand>
</feature>
<feature type="binding site" description="in other chain" evidence="1">
    <location>
        <position position="272"/>
    </location>
    <ligand>
        <name>NADP(+)</name>
        <dbReference type="ChEBI" id="CHEBI:58349"/>
        <note>ligand shared between two neighboring subunits</note>
    </ligand>
</feature>
<feature type="binding site" description="in other chain" evidence="1">
    <location>
        <begin position="288"/>
        <end position="289"/>
    </location>
    <ligand>
        <name>NADP(+)</name>
        <dbReference type="ChEBI" id="CHEBI:58349"/>
        <note>ligand shared between two neighboring subunits</note>
    </ligand>
</feature>
<feature type="binding site" evidence="1">
    <location>
        <begin position="289"/>
        <end position="293"/>
    </location>
    <ligand>
        <name>GMP</name>
        <dbReference type="ChEBI" id="CHEBI:58115"/>
    </ligand>
</feature>
<feature type="binding site" evidence="1">
    <location>
        <begin position="317"/>
        <end position="320"/>
    </location>
    <ligand>
        <name>NADP(+)</name>
        <dbReference type="ChEBI" id="CHEBI:58349"/>
        <note>ligand shared between two neighboring subunits</note>
    </ligand>
</feature>
<sequence length="356" mass="39252">MPRIEFEPKLDFKDVLLRPKRSTLRSRAEVDLMREYVFRNSKKTYVGVPVVASNMDTVGTFEMAEVLAKFSLFTTIHKHYQVDEWKAFVQRVDSNPQIMSQIGISSGISTSDFDKLRTVCDMIPELEYICLDVANGYSEVFVDFIRRVREQFPTHTIFAGNVVTGEMVEELILSGADVVKVGIGPGSVCTTRKKAGVGYPQLSAVLECADASHGLNGHVMSDGGCTNPGDVAKAFGGGADFVMIGGLLAGHDQCGGEVVEKDGKKYKLFYGMSSDTAMKKYQGSVAEYRASEGKTIYMPYRGDVSRTIHDLLGGLRSACTYIGATKLKELSKRATFVRVTQQTNDQYSAYEVPRID</sequence>
<accession>P27442</accession>
<evidence type="ECO:0000250" key="1"/>
<evidence type="ECO:0000305" key="2"/>
<comment type="function">
    <text>Catalyzes the irreversible NADPH-dependent deamination of GMP to IMP. It functions in the conversion of nucleobase, nucleoside and nucleotide derivatives of G to A nucleotides, and in maintaining the intracellular balance of A and G nucleotides.</text>
</comment>
<comment type="catalytic activity">
    <reaction>
        <text>IMP + NH4(+) + NADP(+) = GMP + NADPH + 2 H(+)</text>
        <dbReference type="Rhea" id="RHEA:17185"/>
        <dbReference type="ChEBI" id="CHEBI:15378"/>
        <dbReference type="ChEBI" id="CHEBI:28938"/>
        <dbReference type="ChEBI" id="CHEBI:57783"/>
        <dbReference type="ChEBI" id="CHEBI:58053"/>
        <dbReference type="ChEBI" id="CHEBI:58115"/>
        <dbReference type="ChEBI" id="CHEBI:58349"/>
        <dbReference type="EC" id="1.7.1.7"/>
    </reaction>
</comment>
<comment type="similarity">
    <text evidence="2">Belongs to the IMPDH/GMPR family.</text>
</comment>